<protein>
    <recommendedName>
        <fullName evidence="1">Glutamate--tRNA ligase</fullName>
        <ecNumber evidence="1">6.1.1.17</ecNumber>
    </recommendedName>
    <alternativeName>
        <fullName evidence="1">Glutamyl-tRNA synthetase</fullName>
        <shortName evidence="1">GluRS</shortName>
    </alternativeName>
</protein>
<keyword id="KW-0002">3D-structure</keyword>
<keyword id="KW-0030">Aminoacyl-tRNA synthetase</keyword>
<keyword id="KW-0067">ATP-binding</keyword>
<keyword id="KW-0963">Cytoplasm</keyword>
<keyword id="KW-0436">Ligase</keyword>
<keyword id="KW-0547">Nucleotide-binding</keyword>
<keyword id="KW-0648">Protein biosynthesis</keyword>
<keyword id="KW-1185">Reference proteome</keyword>
<name>SYE_BORBU</name>
<gene>
    <name evidence="1" type="primary">gltX</name>
    <name type="ordered locus">BB_0372</name>
</gene>
<evidence type="ECO:0000255" key="1">
    <source>
        <dbReference type="HAMAP-Rule" id="MF_00022"/>
    </source>
</evidence>
<evidence type="ECO:0007829" key="2">
    <source>
        <dbReference type="PDB" id="4GRI"/>
    </source>
</evidence>
<dbReference type="EC" id="6.1.1.17" evidence="1"/>
<dbReference type="EMBL" id="AE000783">
    <property type="protein sequence ID" value="AAC66742.1"/>
    <property type="molecule type" value="Genomic_DNA"/>
</dbReference>
<dbReference type="PIR" id="C70146">
    <property type="entry name" value="C70146"/>
</dbReference>
<dbReference type="RefSeq" id="NP_212506.1">
    <property type="nucleotide sequence ID" value="NC_001318.1"/>
</dbReference>
<dbReference type="RefSeq" id="WP_002665196.1">
    <property type="nucleotide sequence ID" value="NC_001318.1"/>
</dbReference>
<dbReference type="PDB" id="4GRI">
    <property type="method" value="X-ray"/>
    <property type="resolution" value="2.60 A"/>
    <property type="chains" value="A/B=2-490"/>
</dbReference>
<dbReference type="PDBsum" id="4GRI"/>
<dbReference type="SMR" id="O51345"/>
<dbReference type="STRING" id="224326.BB_0372"/>
<dbReference type="PaxDb" id="224326-BB_0372"/>
<dbReference type="EnsemblBacteria" id="AAC66742">
    <property type="protein sequence ID" value="AAC66742"/>
    <property type="gene ID" value="BB_0372"/>
</dbReference>
<dbReference type="KEGG" id="bbu:BB_0372"/>
<dbReference type="PATRIC" id="fig|224326.49.peg.767"/>
<dbReference type="HOGENOM" id="CLU_015768_6_3_12"/>
<dbReference type="OrthoDB" id="9807503at2"/>
<dbReference type="EvolutionaryTrace" id="O51345"/>
<dbReference type="Proteomes" id="UP000001807">
    <property type="component" value="Chromosome"/>
</dbReference>
<dbReference type="GO" id="GO:0005829">
    <property type="term" value="C:cytosol"/>
    <property type="evidence" value="ECO:0007669"/>
    <property type="project" value="TreeGrafter"/>
</dbReference>
<dbReference type="GO" id="GO:0005524">
    <property type="term" value="F:ATP binding"/>
    <property type="evidence" value="ECO:0007669"/>
    <property type="project" value="UniProtKB-UniRule"/>
</dbReference>
<dbReference type="GO" id="GO:0004818">
    <property type="term" value="F:glutamate-tRNA ligase activity"/>
    <property type="evidence" value="ECO:0007669"/>
    <property type="project" value="UniProtKB-UniRule"/>
</dbReference>
<dbReference type="GO" id="GO:0000049">
    <property type="term" value="F:tRNA binding"/>
    <property type="evidence" value="ECO:0007669"/>
    <property type="project" value="InterPro"/>
</dbReference>
<dbReference type="GO" id="GO:0008270">
    <property type="term" value="F:zinc ion binding"/>
    <property type="evidence" value="ECO:0007669"/>
    <property type="project" value="InterPro"/>
</dbReference>
<dbReference type="GO" id="GO:0006424">
    <property type="term" value="P:glutamyl-tRNA aminoacylation"/>
    <property type="evidence" value="ECO:0007669"/>
    <property type="project" value="UniProtKB-UniRule"/>
</dbReference>
<dbReference type="CDD" id="cd00808">
    <property type="entry name" value="GluRS_core"/>
    <property type="match status" value="1"/>
</dbReference>
<dbReference type="FunFam" id="3.40.50.620:FF:000045">
    <property type="entry name" value="Glutamate--tRNA ligase, mitochondrial"/>
    <property type="match status" value="1"/>
</dbReference>
<dbReference type="Gene3D" id="1.10.10.350">
    <property type="match status" value="1"/>
</dbReference>
<dbReference type="Gene3D" id="1.10.8.70">
    <property type="entry name" value="Glutamate-tRNA synthetase, class I, anticodon-binding domain 1"/>
    <property type="match status" value="1"/>
</dbReference>
<dbReference type="Gene3D" id="1.10.1160.10">
    <property type="entry name" value="Glutamyl-trna Synthetase, Domain 2"/>
    <property type="match status" value="1"/>
</dbReference>
<dbReference type="Gene3D" id="3.90.800.10">
    <property type="entry name" value="Glutamyl-tRNA Synthetase, Domain 3"/>
    <property type="match status" value="1"/>
</dbReference>
<dbReference type="Gene3D" id="3.40.50.620">
    <property type="entry name" value="HUPs"/>
    <property type="match status" value="1"/>
</dbReference>
<dbReference type="HAMAP" id="MF_00022">
    <property type="entry name" value="Glu_tRNA_synth_type1"/>
    <property type="match status" value="1"/>
</dbReference>
<dbReference type="InterPro" id="IPR045462">
    <property type="entry name" value="aa-tRNA-synth_I_cd-bd"/>
</dbReference>
<dbReference type="InterPro" id="IPR020751">
    <property type="entry name" value="aa-tRNA-synth_I_codon-bd_sub2"/>
</dbReference>
<dbReference type="InterPro" id="IPR008925">
    <property type="entry name" value="aa_tRNA-synth_I_cd-bd_sf"/>
</dbReference>
<dbReference type="InterPro" id="IPR004527">
    <property type="entry name" value="Glu-tRNA-ligase_bac/mito"/>
</dbReference>
<dbReference type="InterPro" id="IPR020752">
    <property type="entry name" value="Glu-tRNA-synth_I_codon-bd_sub1"/>
</dbReference>
<dbReference type="InterPro" id="IPR000924">
    <property type="entry name" value="Glu/Gln-tRNA-synth"/>
</dbReference>
<dbReference type="InterPro" id="IPR020058">
    <property type="entry name" value="Glu/Gln-tRNA-synth_Ib_cat-dom"/>
</dbReference>
<dbReference type="InterPro" id="IPR020061">
    <property type="entry name" value="Glu_tRNA_lig_a-bdl"/>
</dbReference>
<dbReference type="InterPro" id="IPR049940">
    <property type="entry name" value="GluQ/Sye"/>
</dbReference>
<dbReference type="InterPro" id="IPR033910">
    <property type="entry name" value="GluRS_core"/>
</dbReference>
<dbReference type="InterPro" id="IPR014729">
    <property type="entry name" value="Rossmann-like_a/b/a_fold"/>
</dbReference>
<dbReference type="NCBIfam" id="TIGR00464">
    <property type="entry name" value="gltX_bact"/>
    <property type="match status" value="1"/>
</dbReference>
<dbReference type="PANTHER" id="PTHR43311">
    <property type="entry name" value="GLUTAMATE--TRNA LIGASE"/>
    <property type="match status" value="1"/>
</dbReference>
<dbReference type="PANTHER" id="PTHR43311:SF2">
    <property type="entry name" value="GLUTAMATE--TRNA LIGASE, MITOCHONDRIAL-RELATED"/>
    <property type="match status" value="1"/>
</dbReference>
<dbReference type="Pfam" id="PF19269">
    <property type="entry name" value="Anticodon_2"/>
    <property type="match status" value="1"/>
</dbReference>
<dbReference type="Pfam" id="PF00749">
    <property type="entry name" value="tRNA-synt_1c"/>
    <property type="match status" value="1"/>
</dbReference>
<dbReference type="PRINTS" id="PR00987">
    <property type="entry name" value="TRNASYNTHGLU"/>
</dbReference>
<dbReference type="SUPFAM" id="SSF48163">
    <property type="entry name" value="An anticodon-binding domain of class I aminoacyl-tRNA synthetases"/>
    <property type="match status" value="1"/>
</dbReference>
<dbReference type="SUPFAM" id="SSF52374">
    <property type="entry name" value="Nucleotidylyl transferase"/>
    <property type="match status" value="1"/>
</dbReference>
<feature type="chain" id="PRO_0000119517" description="Glutamate--tRNA ligase">
    <location>
        <begin position="1"/>
        <end position="490"/>
    </location>
</feature>
<feature type="short sequence motif" description="'HIGH' region" evidence="1">
    <location>
        <begin position="9"/>
        <end position="19"/>
    </location>
</feature>
<feature type="short sequence motif" description="'KMSKS' region" evidence="1">
    <location>
        <begin position="251"/>
        <end position="255"/>
    </location>
</feature>
<feature type="binding site" evidence="1">
    <location>
        <position position="254"/>
    </location>
    <ligand>
        <name>ATP</name>
        <dbReference type="ChEBI" id="CHEBI:30616"/>
    </ligand>
</feature>
<feature type="strand" evidence="2">
    <location>
        <begin position="4"/>
        <end position="7"/>
    </location>
</feature>
<feature type="strand" evidence="2">
    <location>
        <begin position="11"/>
        <end position="13"/>
    </location>
</feature>
<feature type="helix" evidence="2">
    <location>
        <begin position="17"/>
        <end position="32"/>
    </location>
</feature>
<feature type="strand" evidence="2">
    <location>
        <begin position="36"/>
        <end position="39"/>
    </location>
</feature>
<feature type="helix" evidence="2">
    <location>
        <begin position="51"/>
        <end position="64"/>
    </location>
</feature>
<feature type="strand" evidence="2">
    <location>
        <begin position="69"/>
        <end position="71"/>
    </location>
</feature>
<feature type="turn" evidence="2">
    <location>
        <begin position="72"/>
        <end position="74"/>
    </location>
</feature>
<feature type="helix" evidence="2">
    <location>
        <begin position="83"/>
        <end position="85"/>
    </location>
</feature>
<feature type="helix" evidence="2">
    <location>
        <begin position="87"/>
        <end position="99"/>
    </location>
</feature>
<feature type="strand" evidence="2">
    <location>
        <begin position="102"/>
        <end position="106"/>
    </location>
</feature>
<feature type="helix" evidence="2">
    <location>
        <begin position="110"/>
        <end position="122"/>
    </location>
</feature>
<feature type="turn" evidence="2">
    <location>
        <begin position="132"/>
        <end position="135"/>
    </location>
</feature>
<feature type="helix" evidence="2">
    <location>
        <begin position="138"/>
        <end position="146"/>
    </location>
</feature>
<feature type="strand" evidence="2">
    <location>
        <begin position="152"/>
        <end position="155"/>
    </location>
</feature>
<feature type="strand" evidence="2">
    <location>
        <begin position="162"/>
        <end position="167"/>
    </location>
</feature>
<feature type="turn" evidence="2">
    <location>
        <begin position="168"/>
        <end position="170"/>
    </location>
</feature>
<feature type="strand" evidence="2">
    <location>
        <begin position="171"/>
        <end position="176"/>
    </location>
</feature>
<feature type="helix" evidence="2">
    <location>
        <begin position="177"/>
        <end position="179"/>
    </location>
</feature>
<feature type="strand" evidence="2">
    <location>
        <begin position="185"/>
        <end position="187"/>
    </location>
</feature>
<feature type="helix" evidence="2">
    <location>
        <begin position="195"/>
        <end position="205"/>
    </location>
</feature>
<feature type="strand" evidence="2">
    <location>
        <begin position="209"/>
        <end position="214"/>
    </location>
</feature>
<feature type="helix" evidence="2">
    <location>
        <begin position="215"/>
        <end position="220"/>
    </location>
</feature>
<feature type="helix" evidence="2">
    <location>
        <begin position="221"/>
        <end position="231"/>
    </location>
</feature>
<feature type="strand" evidence="2">
    <location>
        <begin position="237"/>
        <end position="241"/>
    </location>
</feature>
<feature type="strand" evidence="2">
    <location>
        <begin position="249"/>
        <end position="251"/>
    </location>
</feature>
<feature type="turn" evidence="2">
    <location>
        <begin position="254"/>
        <end position="256"/>
    </location>
</feature>
<feature type="helix" evidence="2">
    <location>
        <begin position="261"/>
        <end position="267"/>
    </location>
</feature>
<feature type="helix" evidence="2">
    <location>
        <begin position="271"/>
        <end position="280"/>
    </location>
</feature>
<feature type="strand" evidence="2">
    <location>
        <begin position="281"/>
        <end position="283"/>
    </location>
</feature>
<feature type="strand" evidence="2">
    <location>
        <begin position="285"/>
        <end position="288"/>
    </location>
</feature>
<feature type="helix" evidence="2">
    <location>
        <begin position="294"/>
        <end position="300"/>
    </location>
</feature>
<feature type="helix" evidence="2">
    <location>
        <begin position="303"/>
        <end position="305"/>
    </location>
</feature>
<feature type="helix" evidence="2">
    <location>
        <begin position="315"/>
        <end position="328"/>
    </location>
</feature>
<feature type="helix" evidence="2">
    <location>
        <begin position="331"/>
        <end position="344"/>
    </location>
</feature>
<feature type="helix" evidence="2">
    <location>
        <begin position="354"/>
        <end position="368"/>
    </location>
</feature>
<feature type="helix" evidence="2">
    <location>
        <begin position="376"/>
        <end position="380"/>
    </location>
</feature>
<feature type="helix" evidence="2">
    <location>
        <begin position="382"/>
        <end position="385"/>
    </location>
</feature>
<feature type="helix" evidence="2">
    <location>
        <begin position="393"/>
        <end position="395"/>
    </location>
</feature>
<feature type="strand" evidence="2">
    <location>
        <begin position="398"/>
        <end position="400"/>
    </location>
</feature>
<feature type="helix" evidence="2">
    <location>
        <begin position="405"/>
        <end position="417"/>
    </location>
</feature>
<feature type="helix" evidence="2">
    <location>
        <begin position="420"/>
        <end position="422"/>
    </location>
</feature>
<feature type="helix" evidence="2">
    <location>
        <begin position="425"/>
        <end position="438"/>
    </location>
</feature>
<feature type="helix" evidence="2">
    <location>
        <begin position="444"/>
        <end position="454"/>
    </location>
</feature>
<feature type="strand" evidence="2">
    <location>
        <begin position="455"/>
        <end position="459"/>
    </location>
</feature>
<feature type="helix" evidence="2">
    <location>
        <begin position="463"/>
        <end position="470"/>
    </location>
</feature>
<feature type="helix" evidence="2">
    <location>
        <begin position="472"/>
        <end position="486"/>
    </location>
</feature>
<comment type="function">
    <text evidence="1">Catalyzes the attachment of glutamate to tRNA(Glu) in a two-step reaction: glutamate is first activated by ATP to form Glu-AMP and then transferred to the acceptor end of tRNA(Glu).</text>
</comment>
<comment type="catalytic activity">
    <reaction evidence="1">
        <text>tRNA(Glu) + L-glutamate + ATP = L-glutamyl-tRNA(Glu) + AMP + diphosphate</text>
        <dbReference type="Rhea" id="RHEA:23540"/>
        <dbReference type="Rhea" id="RHEA-COMP:9663"/>
        <dbReference type="Rhea" id="RHEA-COMP:9680"/>
        <dbReference type="ChEBI" id="CHEBI:29985"/>
        <dbReference type="ChEBI" id="CHEBI:30616"/>
        <dbReference type="ChEBI" id="CHEBI:33019"/>
        <dbReference type="ChEBI" id="CHEBI:78442"/>
        <dbReference type="ChEBI" id="CHEBI:78520"/>
        <dbReference type="ChEBI" id="CHEBI:456215"/>
        <dbReference type="EC" id="6.1.1.17"/>
    </reaction>
</comment>
<comment type="subunit">
    <text evidence="1">Monomer.</text>
</comment>
<comment type="subcellular location">
    <subcellularLocation>
        <location evidence="1">Cytoplasm</location>
    </subcellularLocation>
</comment>
<comment type="similarity">
    <text evidence="1">Belongs to the class-I aminoacyl-tRNA synthetase family. Glutamate--tRNA ligase type 1 subfamily.</text>
</comment>
<proteinExistence type="evidence at protein level"/>
<sequence length="490" mass="56752">MSTRVRYAPSPTGLQHIGGIRTALFNYFFAKSCGGKFLLRIEDTDQSRYSPEAENDLYSSLKWLGISFDEGPVVGGDYAPYVQSQRSAIYKQYAKYLIESGHAYYCYCSPERLERIKKIQNINKMPPGYDRHCRNLSNEEVENALIKKIKPVVRFKIPLEGDTSFDDILLGRITWANKDISPDPVILKSDGLPTYHLANVVDDYLMKITHVLRAQEWVSSGPLHVLLYKAFKWKPPIYCHLPMVMGNDGQKLSKRHGSTALRQFIEDGYLPEAIINYVTLLGWSYDDKREFFSKNDLEQFFSIEKINKSPAIFDYHKLDFFNSYYIREKKDEDLFNLLLPFFQKKGYVSKPSTLEENQKLKLLIPLIKSRIKKLSDALNMTKFFYEDIKSWNLDEFLSRKKTAKEVCSILELIKPILEGFEKRSSEENDKIFYDFAESNGFKLGEILLPIRIAALGSKVSPPLFDSLKLIGKSKVFERIKLAQEFLRINE</sequence>
<accession>O51345</accession>
<reference key="1">
    <citation type="journal article" date="1997" name="Nature">
        <title>Genomic sequence of a Lyme disease spirochaete, Borrelia burgdorferi.</title>
        <authorList>
            <person name="Fraser C.M."/>
            <person name="Casjens S."/>
            <person name="Huang W.M."/>
            <person name="Sutton G.G."/>
            <person name="Clayton R.A."/>
            <person name="Lathigra R."/>
            <person name="White O."/>
            <person name="Ketchum K.A."/>
            <person name="Dodson R.J."/>
            <person name="Hickey E.K."/>
            <person name="Gwinn M.L."/>
            <person name="Dougherty B.A."/>
            <person name="Tomb J.-F."/>
            <person name="Fleischmann R.D."/>
            <person name="Richardson D.L."/>
            <person name="Peterson J.D."/>
            <person name="Kerlavage A.R."/>
            <person name="Quackenbush J."/>
            <person name="Salzberg S.L."/>
            <person name="Hanson M."/>
            <person name="van Vugt R."/>
            <person name="Palmer N."/>
            <person name="Adams M.D."/>
            <person name="Gocayne J.D."/>
            <person name="Weidman J.F."/>
            <person name="Utterback T.R."/>
            <person name="Watthey L."/>
            <person name="McDonald L.A."/>
            <person name="Artiach P."/>
            <person name="Bowman C."/>
            <person name="Garland S.A."/>
            <person name="Fujii C."/>
            <person name="Cotton M.D."/>
            <person name="Horst K."/>
            <person name="Roberts K.M."/>
            <person name="Hatch B."/>
            <person name="Smith H.O."/>
            <person name="Venter J.C."/>
        </authorList>
    </citation>
    <scope>NUCLEOTIDE SEQUENCE [LARGE SCALE GENOMIC DNA]</scope>
    <source>
        <strain>ATCC 35210 / DSM 4680 / CIP 102532 / B31</strain>
    </source>
</reference>
<organism>
    <name type="scientific">Borreliella burgdorferi (strain ATCC 35210 / DSM 4680 / CIP 102532 / B31)</name>
    <name type="common">Borrelia burgdorferi</name>
    <dbReference type="NCBI Taxonomy" id="224326"/>
    <lineage>
        <taxon>Bacteria</taxon>
        <taxon>Pseudomonadati</taxon>
        <taxon>Spirochaetota</taxon>
        <taxon>Spirochaetia</taxon>
        <taxon>Spirochaetales</taxon>
        <taxon>Borreliaceae</taxon>
        <taxon>Borreliella</taxon>
    </lineage>
</organism>